<evidence type="ECO:0000250" key="1">
    <source>
        <dbReference type="UniProtKB" id="P03901"/>
    </source>
</evidence>
<evidence type="ECO:0000250" key="2">
    <source>
        <dbReference type="UniProtKB" id="P03902"/>
    </source>
</evidence>
<evidence type="ECO:0000255" key="3"/>
<evidence type="ECO:0000305" key="4"/>
<organism>
    <name type="scientific">Uroderma bilobatum</name>
    <name type="common">Tent-making bat</name>
    <dbReference type="NCBI Taxonomy" id="27663"/>
    <lineage>
        <taxon>Eukaryota</taxon>
        <taxon>Metazoa</taxon>
        <taxon>Chordata</taxon>
        <taxon>Craniata</taxon>
        <taxon>Vertebrata</taxon>
        <taxon>Euteleostomi</taxon>
        <taxon>Mammalia</taxon>
        <taxon>Eutheria</taxon>
        <taxon>Laurasiatheria</taxon>
        <taxon>Chiroptera</taxon>
        <taxon>Yangochiroptera</taxon>
        <taxon>Phyllostomidae</taxon>
        <taxon>Stenodermatinae</taxon>
        <taxon>Uroderma</taxon>
    </lineage>
</organism>
<sequence>MSLTYMNMFMAFMISLLGLLMYRSHMMSSLLCLEGMMLSLFVMMTVIILNTHLTLASMIPIILLVFAACEAALGLSLLVMVSTTYGMDYVQNLNLLQC</sequence>
<gene>
    <name type="primary">MT-ND4L</name>
    <name type="synonym">MTND4L</name>
    <name type="synonym">NADH4L</name>
    <name type="synonym">ND4L</name>
</gene>
<geneLocation type="mitochondrion"/>
<protein>
    <recommendedName>
        <fullName>NADH-ubiquinone oxidoreductase chain 4L</fullName>
        <ecNumber>7.1.1.2</ecNumber>
    </recommendedName>
    <alternativeName>
        <fullName>NADH dehydrogenase subunit 4L</fullName>
    </alternativeName>
</protein>
<dbReference type="EC" id="7.1.1.2"/>
<dbReference type="EMBL" id="DQ312378">
    <property type="protein sequence ID" value="ABC47550.1"/>
    <property type="molecule type" value="Genomic_DNA"/>
</dbReference>
<dbReference type="SMR" id="Q1HV11"/>
<dbReference type="GO" id="GO:0005743">
    <property type="term" value="C:mitochondrial inner membrane"/>
    <property type="evidence" value="ECO:0000250"/>
    <property type="project" value="UniProtKB"/>
</dbReference>
<dbReference type="GO" id="GO:0045271">
    <property type="term" value="C:respiratory chain complex I"/>
    <property type="evidence" value="ECO:0000250"/>
    <property type="project" value="UniProtKB"/>
</dbReference>
<dbReference type="GO" id="GO:0008137">
    <property type="term" value="F:NADH dehydrogenase (ubiquinone) activity"/>
    <property type="evidence" value="ECO:0000250"/>
    <property type="project" value="UniProtKB"/>
</dbReference>
<dbReference type="GO" id="GO:0042773">
    <property type="term" value="P:ATP synthesis coupled electron transport"/>
    <property type="evidence" value="ECO:0007669"/>
    <property type="project" value="InterPro"/>
</dbReference>
<dbReference type="FunFam" id="1.10.287.3510:FF:000002">
    <property type="entry name" value="NADH-ubiquinone oxidoreductase chain 4L"/>
    <property type="match status" value="1"/>
</dbReference>
<dbReference type="Gene3D" id="1.10.287.3510">
    <property type="match status" value="1"/>
</dbReference>
<dbReference type="InterPro" id="IPR001133">
    <property type="entry name" value="NADH_UbQ_OxRdtase_chain4L/K"/>
</dbReference>
<dbReference type="InterPro" id="IPR039428">
    <property type="entry name" value="NUOK/Mnh_C1-like"/>
</dbReference>
<dbReference type="PANTHER" id="PTHR11434:SF0">
    <property type="entry name" value="NADH-UBIQUINONE OXIDOREDUCTASE CHAIN 4L"/>
    <property type="match status" value="1"/>
</dbReference>
<dbReference type="PANTHER" id="PTHR11434">
    <property type="entry name" value="NADH-UBIQUINONE OXIDOREDUCTASE SUBUNIT ND4L"/>
    <property type="match status" value="1"/>
</dbReference>
<dbReference type="Pfam" id="PF00420">
    <property type="entry name" value="Oxidored_q2"/>
    <property type="match status" value="1"/>
</dbReference>
<feature type="chain" id="PRO_0000275135" description="NADH-ubiquinone oxidoreductase chain 4L">
    <location>
        <begin position="1"/>
        <end position="98"/>
    </location>
</feature>
<feature type="transmembrane region" description="Helical" evidence="3">
    <location>
        <begin position="1"/>
        <end position="21"/>
    </location>
</feature>
<feature type="transmembrane region" description="Helical" evidence="3">
    <location>
        <begin position="29"/>
        <end position="49"/>
    </location>
</feature>
<feature type="transmembrane region" description="Helical" evidence="3">
    <location>
        <begin position="61"/>
        <end position="81"/>
    </location>
</feature>
<comment type="function">
    <text evidence="1">Core subunit of the mitochondrial membrane respiratory chain NADH dehydrogenase (Complex I) which catalyzes electron transfer from NADH through the respiratory chain, using ubiquinone as an electron acceptor. Part of the enzyme membrane arm which is embedded in the lipid bilayer and involved in proton translocation.</text>
</comment>
<comment type="catalytic activity">
    <reaction evidence="1">
        <text>a ubiquinone + NADH + 5 H(+)(in) = a ubiquinol + NAD(+) + 4 H(+)(out)</text>
        <dbReference type="Rhea" id="RHEA:29091"/>
        <dbReference type="Rhea" id="RHEA-COMP:9565"/>
        <dbReference type="Rhea" id="RHEA-COMP:9566"/>
        <dbReference type="ChEBI" id="CHEBI:15378"/>
        <dbReference type="ChEBI" id="CHEBI:16389"/>
        <dbReference type="ChEBI" id="CHEBI:17976"/>
        <dbReference type="ChEBI" id="CHEBI:57540"/>
        <dbReference type="ChEBI" id="CHEBI:57945"/>
        <dbReference type="EC" id="7.1.1.2"/>
    </reaction>
    <physiologicalReaction direction="left-to-right" evidence="1">
        <dbReference type="Rhea" id="RHEA:29092"/>
    </physiologicalReaction>
</comment>
<comment type="subunit">
    <text evidence="2">Core subunit of respiratory chain NADH dehydrogenase (Complex I) which is composed of 45 different subunits.</text>
</comment>
<comment type="subcellular location">
    <subcellularLocation>
        <location evidence="2">Mitochondrion inner membrane</location>
        <topology evidence="3">Multi-pass membrane protein</topology>
    </subcellularLocation>
</comment>
<comment type="similarity">
    <text evidence="4">Belongs to the complex I subunit 4L family.</text>
</comment>
<proteinExistence type="inferred from homology"/>
<reference key="1">
    <citation type="journal article" date="2006" name="Mol. Phylogenet. Evol.">
        <title>Molecular systematics of Vampyressine bats (Phyllostomidae: Stenodermatinae) with comparison of direct and indirect surveys of mitochondrial DNA variation.</title>
        <authorList>
            <person name="Hoofer S.R."/>
            <person name="Baker R.J."/>
        </authorList>
    </citation>
    <scope>NUCLEOTIDE SEQUENCE [GENOMIC DNA]</scope>
</reference>
<name>NU4LM_UROBI</name>
<accession>Q1HV11</accession>
<keyword id="KW-0249">Electron transport</keyword>
<keyword id="KW-0472">Membrane</keyword>
<keyword id="KW-0496">Mitochondrion</keyword>
<keyword id="KW-0999">Mitochondrion inner membrane</keyword>
<keyword id="KW-0520">NAD</keyword>
<keyword id="KW-0679">Respiratory chain</keyword>
<keyword id="KW-1278">Translocase</keyword>
<keyword id="KW-0812">Transmembrane</keyword>
<keyword id="KW-1133">Transmembrane helix</keyword>
<keyword id="KW-0813">Transport</keyword>
<keyword id="KW-0830">Ubiquinone</keyword>